<dbReference type="EC" id="1.4.4.2" evidence="1"/>
<dbReference type="EMBL" id="CP001215">
    <property type="protein sequence ID" value="ACP12771.1"/>
    <property type="molecule type" value="Genomic_DNA"/>
</dbReference>
<dbReference type="RefSeq" id="WP_000795698.1">
    <property type="nucleotide sequence ID" value="NC_012581.1"/>
</dbReference>
<dbReference type="SMR" id="C3LKQ2"/>
<dbReference type="GeneID" id="93006875"/>
<dbReference type="KEGG" id="bah:BAMEG_4482"/>
<dbReference type="HOGENOM" id="CLU_004620_5_0_9"/>
<dbReference type="GO" id="GO:0005829">
    <property type="term" value="C:cytosol"/>
    <property type="evidence" value="ECO:0007669"/>
    <property type="project" value="TreeGrafter"/>
</dbReference>
<dbReference type="GO" id="GO:0005960">
    <property type="term" value="C:glycine cleavage complex"/>
    <property type="evidence" value="ECO:0007669"/>
    <property type="project" value="TreeGrafter"/>
</dbReference>
<dbReference type="GO" id="GO:0016594">
    <property type="term" value="F:glycine binding"/>
    <property type="evidence" value="ECO:0007669"/>
    <property type="project" value="TreeGrafter"/>
</dbReference>
<dbReference type="GO" id="GO:0004375">
    <property type="term" value="F:glycine dehydrogenase (decarboxylating) activity"/>
    <property type="evidence" value="ECO:0007669"/>
    <property type="project" value="UniProtKB-EC"/>
</dbReference>
<dbReference type="GO" id="GO:0030170">
    <property type="term" value="F:pyridoxal phosphate binding"/>
    <property type="evidence" value="ECO:0007669"/>
    <property type="project" value="TreeGrafter"/>
</dbReference>
<dbReference type="GO" id="GO:0019464">
    <property type="term" value="P:glycine decarboxylation via glycine cleavage system"/>
    <property type="evidence" value="ECO:0007669"/>
    <property type="project" value="UniProtKB-UniRule"/>
</dbReference>
<dbReference type="CDD" id="cd00613">
    <property type="entry name" value="GDC-P"/>
    <property type="match status" value="1"/>
</dbReference>
<dbReference type="FunFam" id="3.40.640.10:FF:000034">
    <property type="entry name" value="Probable glycine dehydrogenase (decarboxylating) subunit 2"/>
    <property type="match status" value="1"/>
</dbReference>
<dbReference type="FunFam" id="3.90.1150.10:FF:000014">
    <property type="entry name" value="Probable glycine dehydrogenase (decarboxylating) subunit 2"/>
    <property type="match status" value="1"/>
</dbReference>
<dbReference type="Gene3D" id="6.20.440.10">
    <property type="match status" value="1"/>
</dbReference>
<dbReference type="Gene3D" id="3.90.1150.10">
    <property type="entry name" value="Aspartate Aminotransferase, domain 1"/>
    <property type="match status" value="1"/>
</dbReference>
<dbReference type="Gene3D" id="3.40.640.10">
    <property type="entry name" value="Type I PLP-dependent aspartate aminotransferase-like (Major domain)"/>
    <property type="match status" value="1"/>
</dbReference>
<dbReference type="HAMAP" id="MF_00713">
    <property type="entry name" value="GcvPB"/>
    <property type="match status" value="1"/>
</dbReference>
<dbReference type="InterPro" id="IPR023012">
    <property type="entry name" value="GcvPB"/>
</dbReference>
<dbReference type="InterPro" id="IPR049316">
    <property type="entry name" value="GDC-P_C"/>
</dbReference>
<dbReference type="InterPro" id="IPR049315">
    <property type="entry name" value="GDC-P_N"/>
</dbReference>
<dbReference type="InterPro" id="IPR020581">
    <property type="entry name" value="GDC_P"/>
</dbReference>
<dbReference type="InterPro" id="IPR015424">
    <property type="entry name" value="PyrdxlP-dep_Trfase"/>
</dbReference>
<dbReference type="InterPro" id="IPR015421">
    <property type="entry name" value="PyrdxlP-dep_Trfase_major"/>
</dbReference>
<dbReference type="InterPro" id="IPR015422">
    <property type="entry name" value="PyrdxlP-dep_Trfase_small"/>
</dbReference>
<dbReference type="NCBIfam" id="NF003346">
    <property type="entry name" value="PRK04366.1"/>
    <property type="match status" value="1"/>
</dbReference>
<dbReference type="PANTHER" id="PTHR11773:SF1">
    <property type="entry name" value="GLYCINE DEHYDROGENASE (DECARBOXYLATING), MITOCHONDRIAL"/>
    <property type="match status" value="1"/>
</dbReference>
<dbReference type="PANTHER" id="PTHR11773">
    <property type="entry name" value="GLYCINE DEHYDROGENASE, DECARBOXYLATING"/>
    <property type="match status" value="1"/>
</dbReference>
<dbReference type="Pfam" id="PF21478">
    <property type="entry name" value="GcvP2_C"/>
    <property type="match status" value="1"/>
</dbReference>
<dbReference type="Pfam" id="PF02347">
    <property type="entry name" value="GDC-P"/>
    <property type="match status" value="1"/>
</dbReference>
<dbReference type="SUPFAM" id="SSF53383">
    <property type="entry name" value="PLP-dependent transferases"/>
    <property type="match status" value="1"/>
</dbReference>
<comment type="function">
    <text evidence="1">The glycine cleavage system catalyzes the degradation of glycine. The P protein binds the alpha-amino group of glycine through its pyridoxal phosphate cofactor; CO(2) is released and the remaining methylamine moiety is then transferred to the lipoamide cofactor of the H protein.</text>
</comment>
<comment type="catalytic activity">
    <reaction evidence="1">
        <text>N(6)-[(R)-lipoyl]-L-lysyl-[glycine-cleavage complex H protein] + glycine + H(+) = N(6)-[(R)-S(8)-aminomethyldihydrolipoyl]-L-lysyl-[glycine-cleavage complex H protein] + CO2</text>
        <dbReference type="Rhea" id="RHEA:24304"/>
        <dbReference type="Rhea" id="RHEA-COMP:10494"/>
        <dbReference type="Rhea" id="RHEA-COMP:10495"/>
        <dbReference type="ChEBI" id="CHEBI:15378"/>
        <dbReference type="ChEBI" id="CHEBI:16526"/>
        <dbReference type="ChEBI" id="CHEBI:57305"/>
        <dbReference type="ChEBI" id="CHEBI:83099"/>
        <dbReference type="ChEBI" id="CHEBI:83143"/>
        <dbReference type="EC" id="1.4.4.2"/>
    </reaction>
</comment>
<comment type="cofactor">
    <cofactor evidence="1">
        <name>pyridoxal 5'-phosphate</name>
        <dbReference type="ChEBI" id="CHEBI:597326"/>
    </cofactor>
</comment>
<comment type="subunit">
    <text evidence="1">The glycine cleavage system is composed of four proteins: P, T, L and H. In this organism, the P 'protein' is a heterodimer of two subunits.</text>
</comment>
<comment type="similarity">
    <text evidence="1">Belongs to the GcvP family. C-terminal subunit subfamily.</text>
</comment>
<proteinExistence type="inferred from homology"/>
<name>GCSPB_BACAC</name>
<gene>
    <name evidence="1" type="primary">gcvPB</name>
    <name type="ordered locus">BAMEG_4482</name>
</gene>
<evidence type="ECO:0000255" key="1">
    <source>
        <dbReference type="HAMAP-Rule" id="MF_00713"/>
    </source>
</evidence>
<organism>
    <name type="scientific">Bacillus anthracis (strain CDC 684 / NRRL 3495)</name>
    <dbReference type="NCBI Taxonomy" id="568206"/>
    <lineage>
        <taxon>Bacteria</taxon>
        <taxon>Bacillati</taxon>
        <taxon>Bacillota</taxon>
        <taxon>Bacilli</taxon>
        <taxon>Bacillales</taxon>
        <taxon>Bacillaceae</taxon>
        <taxon>Bacillus</taxon>
        <taxon>Bacillus cereus group</taxon>
    </lineage>
</organism>
<sequence>MKNQDQALIFEVSKEGRIGYSLPKLDVEEVKLEDVFESDYIRVEDAELPEVSELDIMRHYTALSNRNHGVDSGFYPLGSCTMKYNPKINESVARFAGFANIHPLQDEKTVQGAMELMYDLQEHLIEITGMDTVTLQPAAGAHGEWTGLMLIRAYHEANGDFNRTKVIVPDSAHGTNPASATVAGFETITVKSNEHGLVDLEDLKRVVNEETAALMLTNPNTLGLFEENILEMAEIVHNAGGKLYYDGANLNAVLSQARPGDMGFDVVHLNLHKTFTGPHGGGGPGSGPVGVKADLIPYLPKPILEKTENGYHFNYDRPEAIGRVKPFYGNFGINVRAYTYIRSMGPDGLRAVTEYAVLNANYMMRRLAPFYDLPFDRHCKHEFVLSGRRQKKLGVRTLDIAKRLLDFGYHPPTIYFPLNVEECIMIEPTETESKETLDGFIDKMIQIAKEVEENPEVVQEAPHTTVIKRLDETMAARKPVLRYAKPAPVQV</sequence>
<keyword id="KW-0560">Oxidoreductase</keyword>
<keyword id="KW-0663">Pyridoxal phosphate</keyword>
<feature type="chain" id="PRO_1000147996" description="Probable glycine dehydrogenase (decarboxylating) subunit 2">
    <location>
        <begin position="1"/>
        <end position="491"/>
    </location>
</feature>
<feature type="modified residue" description="N6-(pyridoxal phosphate)lysine" evidence="1">
    <location>
        <position position="273"/>
    </location>
</feature>
<reference key="1">
    <citation type="submission" date="2008-10" db="EMBL/GenBank/DDBJ databases">
        <title>Genome sequence of Bacillus anthracis str. CDC 684.</title>
        <authorList>
            <person name="Dodson R.J."/>
            <person name="Munk A.C."/>
            <person name="Brettin T."/>
            <person name="Bruce D."/>
            <person name="Detter C."/>
            <person name="Tapia R."/>
            <person name="Han C."/>
            <person name="Sutton G."/>
            <person name="Sims D."/>
        </authorList>
    </citation>
    <scope>NUCLEOTIDE SEQUENCE [LARGE SCALE GENOMIC DNA]</scope>
    <source>
        <strain>CDC 684 / NRRL 3495</strain>
    </source>
</reference>
<protein>
    <recommendedName>
        <fullName evidence="1">Probable glycine dehydrogenase (decarboxylating) subunit 2</fullName>
        <ecNumber evidence="1">1.4.4.2</ecNumber>
    </recommendedName>
    <alternativeName>
        <fullName evidence="1">Glycine cleavage system P-protein subunit 2</fullName>
    </alternativeName>
    <alternativeName>
        <fullName evidence="1">Glycine decarboxylase subunit 2</fullName>
    </alternativeName>
    <alternativeName>
        <fullName evidence="1">Glycine dehydrogenase (aminomethyl-transferring) subunit 2</fullName>
    </alternativeName>
</protein>
<accession>C3LKQ2</accession>